<comment type="function">
    <text evidence="1">Part of a heterotetrameric complex that catalyzes the two-step biosynthesis of anthranilate, an intermediate in the biosynthesis of L-tryptophan. In the first step, the glutamine-binding beta subunit of anthranilate synthase (AS) provides the glutamine amidotransferase activity which generates ammonia as a substrate that, along with chorismate, is used in the second step, catalyzed by the large alpha subunit of AS to produce anthranilate (By similarity).</text>
</comment>
<comment type="catalytic activity">
    <reaction>
        <text>chorismate + L-glutamine = anthranilate + pyruvate + L-glutamate + H(+)</text>
        <dbReference type="Rhea" id="RHEA:21732"/>
        <dbReference type="ChEBI" id="CHEBI:15361"/>
        <dbReference type="ChEBI" id="CHEBI:15378"/>
        <dbReference type="ChEBI" id="CHEBI:16567"/>
        <dbReference type="ChEBI" id="CHEBI:29748"/>
        <dbReference type="ChEBI" id="CHEBI:29985"/>
        <dbReference type="ChEBI" id="CHEBI:58359"/>
        <dbReference type="EC" id="4.1.3.27"/>
    </reaction>
</comment>
<comment type="activity regulation">
    <text evidence="1">Feedback inhibition by tryptophan.</text>
</comment>
<comment type="pathway">
    <text>Amino-acid biosynthesis; L-tryptophan biosynthesis; L-tryptophan from chorismate: step 1/5.</text>
</comment>
<comment type="subunit">
    <text evidence="1">Heterotetramer consisting of two non-identical subunits: a beta subunit and a large alpha subunit.</text>
</comment>
<comment type="subcellular location">
    <subcellularLocation>
        <location evidence="3">Plastid</location>
        <location evidence="3">Chloroplast</location>
    </subcellularLocation>
</comment>
<comment type="similarity">
    <text evidence="3">Belongs to the anthranilate synthase component I family.</text>
</comment>
<sequence>MSAVSISAVKSDFFTVEAIAVTHHRTPHPPHFPSLRFPLSLKSPPATSLNLVAGSKLLHFSRRLPSIKCSYTPSLDLSEEQFTKFKKASEKGNLVPLFRCVFSDHLTPILAYRCLVKEDDRDAPSFLFESVEPGSQSSNIGRYSVVGAQPTIEIVAKGNVVTVMDHGASLRTEEEVDDPMMVPQKIMEEWNPQGIDELPEAFCGGWVGYFSYDTVRYVEKKKLPFSNAPEDDRSLPDVNLGLYDDVIVFDHVEKKAYVIHWVRIDKDRSVEENFREGMNRLESLTSRIQDQKPPKMPTGFIKLRTQLFGPKLEKSTMTSEAYKEAVVEAKEHILAGDIFQIVLSQRFERRTFADPFEIYRALRIVNPSPYMAYLQVRGCILVASSPEILLRSKNRKITNRPLAGTVRRGKTPKEDLMLEKELLSDEKQCAEHIMLVDLGRNDVGKVSKPGSVEVKKLKDIEWFSHVMHISSTVVGELLDHLTSWDALRAVLPVGTVSGAPKVKAMELIDELEVTRRGPYSGGFGGISFNGDMDIALALRTMVFPTNTRYDTLYSYKHPQRRREWIAHIQAGAGIVADSNPDDEHRECENKAAALARAIDLAESSFLEAPEFTTITPHINNI</sequence>
<dbReference type="EC" id="4.1.3.27"/>
<dbReference type="EMBL" id="M92354">
    <property type="protein sequence ID" value="AAA32739.1"/>
    <property type="molecule type" value="Genomic_DNA"/>
</dbReference>
<dbReference type="EMBL" id="AC005496">
    <property type="protein sequence ID" value="AAC35228.1"/>
    <property type="molecule type" value="Genomic_DNA"/>
</dbReference>
<dbReference type="EMBL" id="CP002685">
    <property type="protein sequence ID" value="AEC08294.1"/>
    <property type="molecule type" value="Genomic_DNA"/>
</dbReference>
<dbReference type="EMBL" id="AK221602">
    <property type="protein sequence ID" value="BAD95154.1"/>
    <property type="molecule type" value="mRNA"/>
</dbReference>
<dbReference type="PIR" id="JQ1685">
    <property type="entry name" value="JQ1685"/>
</dbReference>
<dbReference type="PIR" id="S27752">
    <property type="entry name" value="S27752"/>
</dbReference>
<dbReference type="RefSeq" id="NP_180530.1">
    <property type="nucleotide sequence ID" value="NM_128523.5"/>
</dbReference>
<dbReference type="SMR" id="P32069"/>
<dbReference type="FunCoup" id="P32069">
    <property type="interactions" value="1016"/>
</dbReference>
<dbReference type="STRING" id="3702.P32069"/>
<dbReference type="iPTMnet" id="P32069"/>
<dbReference type="PaxDb" id="3702-AT2G29690.1"/>
<dbReference type="ProteomicsDB" id="234625"/>
<dbReference type="EnsemblPlants" id="AT2G29690.1">
    <property type="protein sequence ID" value="AT2G29690.1"/>
    <property type="gene ID" value="AT2G29690"/>
</dbReference>
<dbReference type="GeneID" id="817519"/>
<dbReference type="Gramene" id="AT2G29690.1">
    <property type="protein sequence ID" value="AT2G29690.1"/>
    <property type="gene ID" value="AT2G29690"/>
</dbReference>
<dbReference type="KEGG" id="ath:AT2G29690"/>
<dbReference type="Araport" id="AT2G29690"/>
<dbReference type="TAIR" id="AT2G29690">
    <property type="gene designation" value="ASA2"/>
</dbReference>
<dbReference type="eggNOG" id="KOG1223">
    <property type="taxonomic scope" value="Eukaryota"/>
</dbReference>
<dbReference type="HOGENOM" id="CLU_006493_9_3_1"/>
<dbReference type="InParanoid" id="P32069"/>
<dbReference type="OMA" id="GCVGYLD"/>
<dbReference type="PhylomeDB" id="P32069"/>
<dbReference type="BioCyc" id="ARA:AT2G29690-MONOMER"/>
<dbReference type="UniPathway" id="UPA00035">
    <property type="reaction ID" value="UER00040"/>
</dbReference>
<dbReference type="PRO" id="PR:P32069"/>
<dbReference type="Proteomes" id="UP000006548">
    <property type="component" value="Chromosome 2"/>
</dbReference>
<dbReference type="ExpressionAtlas" id="P32069">
    <property type="expression patterns" value="baseline and differential"/>
</dbReference>
<dbReference type="GO" id="GO:0005950">
    <property type="term" value="C:anthranilate synthase complex"/>
    <property type="evidence" value="ECO:0000303"/>
    <property type="project" value="TAIR"/>
</dbReference>
<dbReference type="GO" id="GO:0009507">
    <property type="term" value="C:chloroplast"/>
    <property type="evidence" value="ECO:0007005"/>
    <property type="project" value="TAIR"/>
</dbReference>
<dbReference type="GO" id="GO:0004049">
    <property type="term" value="F:anthranilate synthase activity"/>
    <property type="evidence" value="ECO:0007669"/>
    <property type="project" value="UniProtKB-EC"/>
</dbReference>
<dbReference type="GO" id="GO:0000162">
    <property type="term" value="P:L-tryptophan biosynthetic process"/>
    <property type="evidence" value="ECO:0007669"/>
    <property type="project" value="UniProtKB-UniPathway"/>
</dbReference>
<dbReference type="FunFam" id="3.60.120.10:FF:000003">
    <property type="entry name" value="Anthranilate synthase component 1"/>
    <property type="match status" value="1"/>
</dbReference>
<dbReference type="Gene3D" id="3.60.120.10">
    <property type="entry name" value="Anthranilate synthase"/>
    <property type="match status" value="1"/>
</dbReference>
<dbReference type="InterPro" id="IPR005801">
    <property type="entry name" value="ADC_synthase"/>
</dbReference>
<dbReference type="InterPro" id="IPR019999">
    <property type="entry name" value="Anth_synth_I-like"/>
</dbReference>
<dbReference type="InterPro" id="IPR006805">
    <property type="entry name" value="Anth_synth_I_N"/>
</dbReference>
<dbReference type="InterPro" id="IPR005256">
    <property type="entry name" value="Anth_synth_I_PabB"/>
</dbReference>
<dbReference type="InterPro" id="IPR015890">
    <property type="entry name" value="Chorismate_C"/>
</dbReference>
<dbReference type="NCBIfam" id="TIGR00564">
    <property type="entry name" value="trpE_most"/>
    <property type="match status" value="1"/>
</dbReference>
<dbReference type="PANTHER" id="PTHR11236">
    <property type="entry name" value="AMINOBENZOATE/ANTHRANILATE SYNTHASE"/>
    <property type="match status" value="1"/>
</dbReference>
<dbReference type="PANTHER" id="PTHR11236:SF9">
    <property type="entry name" value="ANTHRANILATE SYNTHASE COMPONENT 1"/>
    <property type="match status" value="1"/>
</dbReference>
<dbReference type="Pfam" id="PF04715">
    <property type="entry name" value="Anth_synt_I_N"/>
    <property type="match status" value="1"/>
</dbReference>
<dbReference type="Pfam" id="PF00425">
    <property type="entry name" value="Chorismate_bind"/>
    <property type="match status" value="1"/>
</dbReference>
<dbReference type="PRINTS" id="PR00095">
    <property type="entry name" value="ANTSNTHASEI"/>
</dbReference>
<dbReference type="SUPFAM" id="SSF56322">
    <property type="entry name" value="ADC synthase"/>
    <property type="match status" value="1"/>
</dbReference>
<protein>
    <recommendedName>
        <fullName>Anthranilate synthase alpha subunit 2, chloroplastic</fullName>
        <ecNumber>4.1.3.27</ecNumber>
    </recommendedName>
    <alternativeName>
        <fullName>Anthranilate synthase component 1-2</fullName>
    </alternativeName>
    <alternativeName>
        <fullName>Anthranilate synthase component I-2</fullName>
    </alternativeName>
</protein>
<proteinExistence type="evidence at transcript level"/>
<gene>
    <name type="primary">ASA2</name>
    <name type="ordered locus">At2g29690</name>
    <name type="ORF">T27A16.21</name>
</gene>
<reference key="1">
    <citation type="journal article" date="1992" name="Plant Cell">
        <title>Two anthranilate synthase genes in Arabidopsis: defense-related regulation of the tryptophan pathway.</title>
        <authorList>
            <person name="Niyogi K.K."/>
            <person name="Fink G.R."/>
        </authorList>
    </citation>
    <scope>NUCLEOTIDE SEQUENCE [GENOMIC DNA]</scope>
</reference>
<reference key="2">
    <citation type="journal article" date="1999" name="Nature">
        <title>Sequence and analysis of chromosome 2 of the plant Arabidopsis thaliana.</title>
        <authorList>
            <person name="Lin X."/>
            <person name="Kaul S."/>
            <person name="Rounsley S.D."/>
            <person name="Shea T.P."/>
            <person name="Benito M.-I."/>
            <person name="Town C.D."/>
            <person name="Fujii C.Y."/>
            <person name="Mason T.M."/>
            <person name="Bowman C.L."/>
            <person name="Barnstead M.E."/>
            <person name="Feldblyum T.V."/>
            <person name="Buell C.R."/>
            <person name="Ketchum K.A."/>
            <person name="Lee J.J."/>
            <person name="Ronning C.M."/>
            <person name="Koo H.L."/>
            <person name="Moffat K.S."/>
            <person name="Cronin L.A."/>
            <person name="Shen M."/>
            <person name="Pai G."/>
            <person name="Van Aken S."/>
            <person name="Umayam L."/>
            <person name="Tallon L.J."/>
            <person name="Gill J.E."/>
            <person name="Adams M.D."/>
            <person name="Carrera A.J."/>
            <person name="Creasy T.H."/>
            <person name="Goodman H.M."/>
            <person name="Somerville C.R."/>
            <person name="Copenhaver G.P."/>
            <person name="Preuss D."/>
            <person name="Nierman W.C."/>
            <person name="White O."/>
            <person name="Eisen J.A."/>
            <person name="Salzberg S.L."/>
            <person name="Fraser C.M."/>
            <person name="Venter J.C."/>
        </authorList>
    </citation>
    <scope>NUCLEOTIDE SEQUENCE [LARGE SCALE GENOMIC DNA]</scope>
    <source>
        <strain>cv. Columbia</strain>
    </source>
</reference>
<reference key="3">
    <citation type="journal article" date="2017" name="Plant J.">
        <title>Araport11: a complete reannotation of the Arabidopsis thaliana reference genome.</title>
        <authorList>
            <person name="Cheng C.Y."/>
            <person name="Krishnakumar V."/>
            <person name="Chan A.P."/>
            <person name="Thibaud-Nissen F."/>
            <person name="Schobel S."/>
            <person name="Town C.D."/>
        </authorList>
    </citation>
    <scope>GENOME REANNOTATION</scope>
    <source>
        <strain>cv. Columbia</strain>
    </source>
</reference>
<reference key="4">
    <citation type="submission" date="2005-03" db="EMBL/GenBank/DDBJ databases">
        <title>Large-scale analysis of RIKEN Arabidopsis full-length (RAFL) cDNAs.</title>
        <authorList>
            <person name="Totoki Y."/>
            <person name="Seki M."/>
            <person name="Ishida J."/>
            <person name="Nakajima M."/>
            <person name="Enju A."/>
            <person name="Kamiya A."/>
            <person name="Narusaka M."/>
            <person name="Shin-i T."/>
            <person name="Nakagawa M."/>
            <person name="Sakamoto N."/>
            <person name="Oishi K."/>
            <person name="Kohara Y."/>
            <person name="Kobayashi M."/>
            <person name="Toyoda A."/>
            <person name="Sakaki Y."/>
            <person name="Sakurai T."/>
            <person name="Iida K."/>
            <person name="Akiyama K."/>
            <person name="Satou M."/>
            <person name="Toyoda T."/>
            <person name="Konagaya A."/>
            <person name="Carninci P."/>
            <person name="Kawai J."/>
            <person name="Hayashizaki Y."/>
            <person name="Shinozaki K."/>
        </authorList>
    </citation>
    <scope>NUCLEOTIDE SEQUENCE [LARGE SCALE MRNA]</scope>
    <source>
        <strain>cv. Columbia</strain>
    </source>
</reference>
<evidence type="ECO:0000250" key="1"/>
<evidence type="ECO:0000255" key="2"/>
<evidence type="ECO:0000305" key="3"/>
<name>TRPX_ARATH</name>
<keyword id="KW-0028">Amino-acid biosynthesis</keyword>
<keyword id="KW-0057">Aromatic amino acid biosynthesis</keyword>
<keyword id="KW-0150">Chloroplast</keyword>
<keyword id="KW-0456">Lyase</keyword>
<keyword id="KW-0934">Plastid</keyword>
<keyword id="KW-1185">Reference proteome</keyword>
<keyword id="KW-0809">Transit peptide</keyword>
<keyword id="KW-0822">Tryptophan biosynthesis</keyword>
<accession>P32069</accession>
<accession>Q56XS1</accession>
<organism>
    <name type="scientific">Arabidopsis thaliana</name>
    <name type="common">Mouse-ear cress</name>
    <dbReference type="NCBI Taxonomy" id="3702"/>
    <lineage>
        <taxon>Eukaryota</taxon>
        <taxon>Viridiplantae</taxon>
        <taxon>Streptophyta</taxon>
        <taxon>Embryophyta</taxon>
        <taxon>Tracheophyta</taxon>
        <taxon>Spermatophyta</taxon>
        <taxon>Magnoliopsida</taxon>
        <taxon>eudicotyledons</taxon>
        <taxon>Gunneridae</taxon>
        <taxon>Pentapetalae</taxon>
        <taxon>rosids</taxon>
        <taxon>malvids</taxon>
        <taxon>Brassicales</taxon>
        <taxon>Brassicaceae</taxon>
        <taxon>Camelineae</taxon>
        <taxon>Arabidopsis</taxon>
    </lineage>
</organism>
<feature type="transit peptide" description="Chloroplast" evidence="2">
    <location>
        <begin position="1"/>
        <end position="87"/>
    </location>
</feature>
<feature type="chain" id="PRO_0000035790" description="Anthranilate synthase alpha subunit 2, chloroplastic">
    <location>
        <begin position="88"/>
        <end position="621"/>
    </location>
</feature>
<feature type="sequence conflict" description="In Ref. 4; BAD95154." evidence="3" ref="4">
    <original>F</original>
    <variation>L</variation>
    <location>
        <position position="85"/>
    </location>
</feature>